<accession>Q80YD3</accession>
<accession>Q8C5W8</accession>
<reference key="1">
    <citation type="journal article" date="2005" name="Science">
        <title>The transcriptional landscape of the mammalian genome.</title>
        <authorList>
            <person name="Carninci P."/>
            <person name="Kasukawa T."/>
            <person name="Katayama S."/>
            <person name="Gough J."/>
            <person name="Frith M.C."/>
            <person name="Maeda N."/>
            <person name="Oyama R."/>
            <person name="Ravasi T."/>
            <person name="Lenhard B."/>
            <person name="Wells C."/>
            <person name="Kodzius R."/>
            <person name="Shimokawa K."/>
            <person name="Bajic V.B."/>
            <person name="Brenner S.E."/>
            <person name="Batalov S."/>
            <person name="Forrest A.R."/>
            <person name="Zavolan M."/>
            <person name="Davis M.J."/>
            <person name="Wilming L.G."/>
            <person name="Aidinis V."/>
            <person name="Allen J.E."/>
            <person name="Ambesi-Impiombato A."/>
            <person name="Apweiler R."/>
            <person name="Aturaliya R.N."/>
            <person name="Bailey T.L."/>
            <person name="Bansal M."/>
            <person name="Baxter L."/>
            <person name="Beisel K.W."/>
            <person name="Bersano T."/>
            <person name="Bono H."/>
            <person name="Chalk A.M."/>
            <person name="Chiu K.P."/>
            <person name="Choudhary V."/>
            <person name="Christoffels A."/>
            <person name="Clutterbuck D.R."/>
            <person name="Crowe M.L."/>
            <person name="Dalla E."/>
            <person name="Dalrymple B.P."/>
            <person name="de Bono B."/>
            <person name="Della Gatta G."/>
            <person name="di Bernardo D."/>
            <person name="Down T."/>
            <person name="Engstrom P."/>
            <person name="Fagiolini M."/>
            <person name="Faulkner G."/>
            <person name="Fletcher C.F."/>
            <person name="Fukushima T."/>
            <person name="Furuno M."/>
            <person name="Futaki S."/>
            <person name="Gariboldi M."/>
            <person name="Georgii-Hemming P."/>
            <person name="Gingeras T.R."/>
            <person name="Gojobori T."/>
            <person name="Green R.E."/>
            <person name="Gustincich S."/>
            <person name="Harbers M."/>
            <person name="Hayashi Y."/>
            <person name="Hensch T.K."/>
            <person name="Hirokawa N."/>
            <person name="Hill D."/>
            <person name="Huminiecki L."/>
            <person name="Iacono M."/>
            <person name="Ikeo K."/>
            <person name="Iwama A."/>
            <person name="Ishikawa T."/>
            <person name="Jakt M."/>
            <person name="Kanapin A."/>
            <person name="Katoh M."/>
            <person name="Kawasawa Y."/>
            <person name="Kelso J."/>
            <person name="Kitamura H."/>
            <person name="Kitano H."/>
            <person name="Kollias G."/>
            <person name="Krishnan S.P."/>
            <person name="Kruger A."/>
            <person name="Kummerfeld S.K."/>
            <person name="Kurochkin I.V."/>
            <person name="Lareau L.F."/>
            <person name="Lazarevic D."/>
            <person name="Lipovich L."/>
            <person name="Liu J."/>
            <person name="Liuni S."/>
            <person name="McWilliam S."/>
            <person name="Madan Babu M."/>
            <person name="Madera M."/>
            <person name="Marchionni L."/>
            <person name="Matsuda H."/>
            <person name="Matsuzawa S."/>
            <person name="Miki H."/>
            <person name="Mignone F."/>
            <person name="Miyake S."/>
            <person name="Morris K."/>
            <person name="Mottagui-Tabar S."/>
            <person name="Mulder N."/>
            <person name="Nakano N."/>
            <person name="Nakauchi H."/>
            <person name="Ng P."/>
            <person name="Nilsson R."/>
            <person name="Nishiguchi S."/>
            <person name="Nishikawa S."/>
            <person name="Nori F."/>
            <person name="Ohara O."/>
            <person name="Okazaki Y."/>
            <person name="Orlando V."/>
            <person name="Pang K.C."/>
            <person name="Pavan W.J."/>
            <person name="Pavesi G."/>
            <person name="Pesole G."/>
            <person name="Petrovsky N."/>
            <person name="Piazza S."/>
            <person name="Reed J."/>
            <person name="Reid J.F."/>
            <person name="Ring B.Z."/>
            <person name="Ringwald M."/>
            <person name="Rost B."/>
            <person name="Ruan Y."/>
            <person name="Salzberg S.L."/>
            <person name="Sandelin A."/>
            <person name="Schneider C."/>
            <person name="Schoenbach C."/>
            <person name="Sekiguchi K."/>
            <person name="Semple C.A."/>
            <person name="Seno S."/>
            <person name="Sessa L."/>
            <person name="Sheng Y."/>
            <person name="Shibata Y."/>
            <person name="Shimada H."/>
            <person name="Shimada K."/>
            <person name="Silva D."/>
            <person name="Sinclair B."/>
            <person name="Sperling S."/>
            <person name="Stupka E."/>
            <person name="Sugiura K."/>
            <person name="Sultana R."/>
            <person name="Takenaka Y."/>
            <person name="Taki K."/>
            <person name="Tammoja K."/>
            <person name="Tan S.L."/>
            <person name="Tang S."/>
            <person name="Taylor M.S."/>
            <person name="Tegner J."/>
            <person name="Teichmann S.A."/>
            <person name="Ueda H.R."/>
            <person name="van Nimwegen E."/>
            <person name="Verardo R."/>
            <person name="Wei C.L."/>
            <person name="Yagi K."/>
            <person name="Yamanishi H."/>
            <person name="Zabarovsky E."/>
            <person name="Zhu S."/>
            <person name="Zimmer A."/>
            <person name="Hide W."/>
            <person name="Bult C."/>
            <person name="Grimmond S.M."/>
            <person name="Teasdale R.D."/>
            <person name="Liu E.T."/>
            <person name="Brusic V."/>
            <person name="Quackenbush J."/>
            <person name="Wahlestedt C."/>
            <person name="Mattick J.S."/>
            <person name="Hume D.A."/>
            <person name="Kai C."/>
            <person name="Sasaki D."/>
            <person name="Tomaru Y."/>
            <person name="Fukuda S."/>
            <person name="Kanamori-Katayama M."/>
            <person name="Suzuki M."/>
            <person name="Aoki J."/>
            <person name="Arakawa T."/>
            <person name="Iida J."/>
            <person name="Imamura K."/>
            <person name="Itoh M."/>
            <person name="Kato T."/>
            <person name="Kawaji H."/>
            <person name="Kawagashira N."/>
            <person name="Kawashima T."/>
            <person name="Kojima M."/>
            <person name="Kondo S."/>
            <person name="Konno H."/>
            <person name="Nakano K."/>
            <person name="Ninomiya N."/>
            <person name="Nishio T."/>
            <person name="Okada M."/>
            <person name="Plessy C."/>
            <person name="Shibata K."/>
            <person name="Shiraki T."/>
            <person name="Suzuki S."/>
            <person name="Tagami M."/>
            <person name="Waki K."/>
            <person name="Watahiki A."/>
            <person name="Okamura-Oho Y."/>
            <person name="Suzuki H."/>
            <person name="Kawai J."/>
            <person name="Hayashizaki Y."/>
        </authorList>
    </citation>
    <scope>NUCLEOTIDE SEQUENCE [LARGE SCALE MRNA] (ISOFORM 2)</scope>
    <source>
        <strain>C57BL/6J</strain>
        <tissue>Testis</tissue>
    </source>
</reference>
<reference key="2">
    <citation type="journal article" date="2009" name="PLoS Biol.">
        <title>Lineage-specific biology revealed by a finished genome assembly of the mouse.</title>
        <authorList>
            <person name="Church D.M."/>
            <person name="Goodstadt L."/>
            <person name="Hillier L.W."/>
            <person name="Zody M.C."/>
            <person name="Goldstein S."/>
            <person name="She X."/>
            <person name="Bult C.J."/>
            <person name="Agarwala R."/>
            <person name="Cherry J.L."/>
            <person name="DiCuccio M."/>
            <person name="Hlavina W."/>
            <person name="Kapustin Y."/>
            <person name="Meric P."/>
            <person name="Maglott D."/>
            <person name="Birtle Z."/>
            <person name="Marques A.C."/>
            <person name="Graves T."/>
            <person name="Zhou S."/>
            <person name="Teague B."/>
            <person name="Potamousis K."/>
            <person name="Churas C."/>
            <person name="Place M."/>
            <person name="Herschleb J."/>
            <person name="Runnheim R."/>
            <person name="Forrest D."/>
            <person name="Amos-Landgraf J."/>
            <person name="Schwartz D.C."/>
            <person name="Cheng Z."/>
            <person name="Lindblad-Toh K."/>
            <person name="Eichler E.E."/>
            <person name="Ponting C.P."/>
        </authorList>
    </citation>
    <scope>NUCLEOTIDE SEQUENCE [LARGE SCALE GENOMIC DNA]</scope>
    <source>
        <strain>C57BL/6J</strain>
    </source>
</reference>
<reference key="3">
    <citation type="journal article" date="2004" name="Genome Res.">
        <title>The status, quality, and expansion of the NIH full-length cDNA project: the Mammalian Gene Collection (MGC).</title>
        <authorList>
            <consortium name="The MGC Project Team"/>
        </authorList>
    </citation>
    <scope>NUCLEOTIDE SEQUENCE [LARGE SCALE MRNA] (ISOFORM 1)</scope>
    <source>
        <tissue>Testis</tissue>
    </source>
</reference>
<name>S31F3_MOUSE</name>
<organism>
    <name type="scientific">Mus musculus</name>
    <name type="common">Mouse</name>
    <dbReference type="NCBI Taxonomy" id="10090"/>
    <lineage>
        <taxon>Eukaryota</taxon>
        <taxon>Metazoa</taxon>
        <taxon>Chordata</taxon>
        <taxon>Craniata</taxon>
        <taxon>Vertebrata</taxon>
        <taxon>Euteleostomi</taxon>
        <taxon>Mammalia</taxon>
        <taxon>Eutheria</taxon>
        <taxon>Euarchontoglires</taxon>
        <taxon>Glires</taxon>
        <taxon>Rodentia</taxon>
        <taxon>Myomorpha</taxon>
        <taxon>Muroidea</taxon>
        <taxon>Muridae</taxon>
        <taxon>Murinae</taxon>
        <taxon>Mus</taxon>
        <taxon>Mus</taxon>
    </lineage>
</organism>
<proteinExistence type="evidence at transcript level"/>
<protein>
    <recommendedName>
        <fullName>Protein SPATA31F3</fullName>
    </recommendedName>
    <alternativeName>
        <fullName evidence="5">Protein FAM205C</fullName>
    </alternativeName>
</protein>
<comment type="subcellular location">
    <subcellularLocation>
        <location evidence="5">Membrane</location>
        <topology evidence="5">Single-pass membrane protein</topology>
    </subcellularLocation>
</comment>
<comment type="alternative products">
    <event type="alternative splicing"/>
    <isoform>
        <id>Q80YD3-1</id>
        <name>1</name>
        <sequence type="displayed"/>
    </isoform>
    <isoform>
        <id>Q80YD3-2</id>
        <name>2</name>
        <sequence type="described" ref="VSP_031342"/>
    </isoform>
</comment>
<comment type="similarity">
    <text evidence="5">Belongs to the SPATA31 family.</text>
</comment>
<sequence>MMVPSFILWDVGSSVYTYGSLFIIALIIWHVRRSHRGLRLGPIKSCTKCFRRIKQKPSDRTLRVKKRTTKEETEKLQKLLSNMKRQGWLPQEGSVRRLLCSDPSCPICNAMALEIQQLLGVENKKTSSSLLRHSRSFSCLEALSPPKVLNDQSSELSKVLNGQSSELSKVLNGQSSELSKVLNDQSSELSKVLNDQSSELSSQHSKDISLPPKFMQSQSTDQKLTLSAPLSTGNTVLQCYHPAPQQQPEPQGSNAFQDVSGLSSSSMDEHGVPANQQKKRKKTKKLVSKNQAAPSEAEMENKMTFFSHWVNPEVKCDRPEESFAFYKSETGAKPKTGEPKKSSAKVRAEEPNLEKHAKDLKAKPLHAKRNI</sequence>
<evidence type="ECO:0000250" key="1">
    <source>
        <dbReference type="UniProtKB" id="Q642A3"/>
    </source>
</evidence>
<evidence type="ECO:0000255" key="2"/>
<evidence type="ECO:0000256" key="3">
    <source>
        <dbReference type="SAM" id="MobiDB-lite"/>
    </source>
</evidence>
<evidence type="ECO:0000303" key="4">
    <source>
    </source>
</evidence>
<evidence type="ECO:0000305" key="5"/>
<gene>
    <name type="primary">Spata31f3</name>
    <name type="synonym">Fam205c</name>
</gene>
<feature type="chain" id="PRO_0000319053" description="Protein SPATA31F3">
    <location>
        <begin position="1"/>
        <end position="371"/>
    </location>
</feature>
<feature type="transmembrane region" description="Helical" evidence="2">
    <location>
        <begin position="7"/>
        <end position="29"/>
    </location>
</feature>
<feature type="region of interest" description="Disordered" evidence="3">
    <location>
        <begin position="189"/>
        <end position="222"/>
    </location>
</feature>
<feature type="region of interest" description="Disordered" evidence="3">
    <location>
        <begin position="240"/>
        <end position="299"/>
    </location>
</feature>
<feature type="region of interest" description="Disordered" evidence="3">
    <location>
        <begin position="326"/>
        <end position="371"/>
    </location>
</feature>
<feature type="coiled-coil region" evidence="2">
    <location>
        <begin position="62"/>
        <end position="86"/>
    </location>
</feature>
<feature type="compositionally biased region" description="Polar residues" evidence="3">
    <location>
        <begin position="189"/>
        <end position="203"/>
    </location>
</feature>
<feature type="compositionally biased region" description="Polar residues" evidence="3">
    <location>
        <begin position="244"/>
        <end position="266"/>
    </location>
</feature>
<feature type="compositionally biased region" description="Basic residues" evidence="3">
    <location>
        <begin position="277"/>
        <end position="287"/>
    </location>
</feature>
<feature type="compositionally biased region" description="Basic and acidic residues" evidence="3">
    <location>
        <begin position="330"/>
        <end position="362"/>
    </location>
</feature>
<feature type="modified residue" description="Phosphoserine" evidence="1">
    <location>
        <position position="197"/>
    </location>
</feature>
<feature type="modified residue" description="Phosphoserine" evidence="1">
    <location>
        <position position="198"/>
    </location>
</feature>
<feature type="splice variant" id="VSP_031342" description="In isoform 2." evidence="4">
    <location>
        <position position="292"/>
    </location>
</feature>
<dbReference type="EMBL" id="AK077002">
    <property type="protein sequence ID" value="BAC36559.1"/>
    <property type="molecule type" value="mRNA"/>
</dbReference>
<dbReference type="EMBL" id="AL672276">
    <property type="status" value="NOT_ANNOTATED_CDS"/>
    <property type="molecule type" value="Genomic_DNA"/>
</dbReference>
<dbReference type="EMBL" id="BC049635">
    <property type="protein sequence ID" value="AAH49635.1"/>
    <property type="molecule type" value="mRNA"/>
</dbReference>
<dbReference type="CCDS" id="CCDS18082.1">
    <molecule id="Q80YD3-2"/>
</dbReference>
<dbReference type="CCDS" id="CCDS89730.1">
    <molecule id="Q80YD3-1"/>
</dbReference>
<dbReference type="RefSeq" id="NP_001343308.1">
    <molecule id="Q80YD3-1"/>
    <property type="nucleotide sequence ID" value="NM_001356379.2"/>
</dbReference>
<dbReference type="RefSeq" id="NP_808453.1">
    <molecule id="Q80YD3-2"/>
    <property type="nucleotide sequence ID" value="NM_177785.6"/>
</dbReference>
<dbReference type="RefSeq" id="XP_006538035.1">
    <property type="nucleotide sequence ID" value="XM_006537972.3"/>
</dbReference>
<dbReference type="iPTMnet" id="Q80YD3"/>
<dbReference type="PhosphoSitePlus" id="Q80YD3"/>
<dbReference type="SwissPalm" id="Q80YD3"/>
<dbReference type="PaxDb" id="10090-ENSMUSP00000060318"/>
<dbReference type="ProteomicsDB" id="267691">
    <molecule id="Q80YD3-1"/>
</dbReference>
<dbReference type="ProteomicsDB" id="267692">
    <molecule id="Q80YD3-2"/>
</dbReference>
<dbReference type="Ensembl" id="ENSMUST00000055944.11">
    <molecule id="Q80YD3-2"/>
    <property type="protein sequence ID" value="ENSMUSP00000060318.5"/>
    <property type="gene ID" value="ENSMUSG00000050141.14"/>
</dbReference>
<dbReference type="Ensembl" id="ENSMUST00000107978.2">
    <molecule id="Q80YD3-1"/>
    <property type="protein sequence ID" value="ENSMUSP00000103612.2"/>
    <property type="gene ID" value="ENSMUSG00000050141.14"/>
</dbReference>
<dbReference type="GeneID" id="277773"/>
<dbReference type="KEGG" id="mmu:277773"/>
<dbReference type="UCSC" id="uc008sog.1">
    <molecule id="Q80YD3-2"/>
    <property type="organism name" value="mouse"/>
</dbReference>
<dbReference type="UCSC" id="uc008soh.2">
    <molecule id="Q80YD3-1"/>
    <property type="organism name" value="mouse"/>
</dbReference>
<dbReference type="AGR" id="MGI:2679716"/>
<dbReference type="CTD" id="100129969"/>
<dbReference type="MGI" id="MGI:2679716">
    <property type="gene designation" value="Spata31f3"/>
</dbReference>
<dbReference type="VEuPathDB" id="HostDB:ENSMUSG00000050141"/>
<dbReference type="eggNOG" id="ENOG502THPB">
    <property type="taxonomic scope" value="Eukaryota"/>
</dbReference>
<dbReference type="GeneTree" id="ENSGT00950000183043"/>
<dbReference type="HOGENOM" id="CLU_061708_0_0_1"/>
<dbReference type="InParanoid" id="Q80YD3"/>
<dbReference type="OMA" id="FSHWINP"/>
<dbReference type="OrthoDB" id="9535823at2759"/>
<dbReference type="PhylomeDB" id="Q80YD3"/>
<dbReference type="TreeFam" id="TF337856"/>
<dbReference type="BioGRID-ORCS" id="277773">
    <property type="hits" value="0 hits in 45 CRISPR screens"/>
</dbReference>
<dbReference type="PRO" id="PR:Q80YD3"/>
<dbReference type="Proteomes" id="UP000000589">
    <property type="component" value="Chromosome 4"/>
</dbReference>
<dbReference type="RNAct" id="Q80YD3">
    <property type="molecule type" value="protein"/>
</dbReference>
<dbReference type="Bgee" id="ENSMUSG00000050141">
    <property type="expression patterns" value="Expressed in spermatid and 40 other cell types or tissues"/>
</dbReference>
<dbReference type="GO" id="GO:0016020">
    <property type="term" value="C:membrane"/>
    <property type="evidence" value="ECO:0007669"/>
    <property type="project" value="UniProtKB-SubCell"/>
</dbReference>
<dbReference type="InterPro" id="IPR027970">
    <property type="entry name" value="SPATA31F3-like"/>
</dbReference>
<dbReference type="PANTHER" id="PTHR21859">
    <property type="entry name" value="ACROSOME-SPECIFIC PROTEIN"/>
    <property type="match status" value="1"/>
</dbReference>
<dbReference type="PANTHER" id="PTHR21859:SF15">
    <property type="entry name" value="PROTEIN SPATA31F1-RELATED"/>
    <property type="match status" value="1"/>
</dbReference>
<dbReference type="Pfam" id="PF15371">
    <property type="entry name" value="DUF4599"/>
    <property type="match status" value="1"/>
</dbReference>
<keyword id="KW-0025">Alternative splicing</keyword>
<keyword id="KW-0175">Coiled coil</keyword>
<keyword id="KW-0472">Membrane</keyword>
<keyword id="KW-0597">Phosphoprotein</keyword>
<keyword id="KW-1185">Reference proteome</keyword>
<keyword id="KW-0812">Transmembrane</keyword>
<keyword id="KW-1133">Transmembrane helix</keyword>